<dbReference type="EC" id="2.7.11.13"/>
<dbReference type="EMBL" id="HE601474">
    <property type="protein sequence ID" value="CAP36943.2"/>
    <property type="molecule type" value="Genomic_DNA"/>
</dbReference>
<dbReference type="SMR" id="A8XWC4"/>
<dbReference type="FunCoup" id="A8XWC4">
    <property type="interactions" value="4"/>
</dbReference>
<dbReference type="STRING" id="6238.A8XWC4"/>
<dbReference type="WormBase" id="CBG19775">
    <property type="protein sequence ID" value="CBP38325"/>
    <property type="gene ID" value="WBGene00038940"/>
    <property type="gene designation" value="Cbr-dkf-1"/>
</dbReference>
<dbReference type="eggNOG" id="KOG4236">
    <property type="taxonomic scope" value="Eukaryota"/>
</dbReference>
<dbReference type="HOGENOM" id="CLU_009772_1_0_1"/>
<dbReference type="InParanoid" id="A8XWC4"/>
<dbReference type="OMA" id="YARFIPE"/>
<dbReference type="Proteomes" id="UP000008549">
    <property type="component" value="Unassembled WGS sequence"/>
</dbReference>
<dbReference type="GO" id="GO:0005829">
    <property type="term" value="C:cytosol"/>
    <property type="evidence" value="ECO:0000318"/>
    <property type="project" value="GO_Central"/>
</dbReference>
<dbReference type="GO" id="GO:0016020">
    <property type="term" value="C:membrane"/>
    <property type="evidence" value="ECO:0007669"/>
    <property type="project" value="UniProtKB-SubCell"/>
</dbReference>
<dbReference type="GO" id="GO:0005524">
    <property type="term" value="F:ATP binding"/>
    <property type="evidence" value="ECO:0007669"/>
    <property type="project" value="UniProtKB-KW"/>
</dbReference>
<dbReference type="GO" id="GO:0004697">
    <property type="term" value="F:diacylglycerol-dependent serine/threonine kinase activity"/>
    <property type="evidence" value="ECO:0007669"/>
    <property type="project" value="UniProtKB-EC"/>
</dbReference>
<dbReference type="GO" id="GO:0106310">
    <property type="term" value="F:protein serine kinase activity"/>
    <property type="evidence" value="ECO:0007669"/>
    <property type="project" value="RHEA"/>
</dbReference>
<dbReference type="GO" id="GO:0004674">
    <property type="term" value="F:protein serine/threonine kinase activity"/>
    <property type="evidence" value="ECO:0000318"/>
    <property type="project" value="GO_Central"/>
</dbReference>
<dbReference type="GO" id="GO:0008270">
    <property type="term" value="F:zinc ion binding"/>
    <property type="evidence" value="ECO:0007669"/>
    <property type="project" value="UniProtKB-KW"/>
</dbReference>
<dbReference type="GO" id="GO:0035556">
    <property type="term" value="P:intracellular signal transduction"/>
    <property type="evidence" value="ECO:0000318"/>
    <property type="project" value="GO_Central"/>
</dbReference>
<dbReference type="GO" id="GO:0007200">
    <property type="term" value="P:phospholipase C-activating G protein-coupled receptor signaling pathway"/>
    <property type="evidence" value="ECO:0000318"/>
    <property type="project" value="GO_Central"/>
</dbReference>
<dbReference type="CDD" id="cd20798">
    <property type="entry name" value="C1_CeDKF1-like_rpt2"/>
    <property type="match status" value="1"/>
</dbReference>
<dbReference type="CDD" id="cd01239">
    <property type="entry name" value="PH_PKD"/>
    <property type="match status" value="1"/>
</dbReference>
<dbReference type="CDD" id="cd14082">
    <property type="entry name" value="STKc_PKD"/>
    <property type="match status" value="1"/>
</dbReference>
<dbReference type="FunFam" id="3.30.200.20:FF:000042">
    <property type="entry name" value="Aurora kinase A"/>
    <property type="match status" value="1"/>
</dbReference>
<dbReference type="FunFam" id="1.10.510.10:FF:000571">
    <property type="entry name" value="Maternal embryonic leucine zipper kinase"/>
    <property type="match status" value="1"/>
</dbReference>
<dbReference type="FunFam" id="2.30.29.30:FF:000556">
    <property type="entry name" value="Serine/threonine-protein kinase dkf-1"/>
    <property type="match status" value="1"/>
</dbReference>
<dbReference type="FunFam" id="3.30.60.20:FF:000080">
    <property type="entry name" value="Serine/threonine-protein kinase dkf-1"/>
    <property type="match status" value="1"/>
</dbReference>
<dbReference type="Gene3D" id="3.30.60.20">
    <property type="match status" value="2"/>
</dbReference>
<dbReference type="Gene3D" id="2.30.29.30">
    <property type="entry name" value="Pleckstrin-homology domain (PH domain)/Phosphotyrosine-binding domain (PTB)"/>
    <property type="match status" value="1"/>
</dbReference>
<dbReference type="Gene3D" id="1.10.510.10">
    <property type="entry name" value="Transferase(Phosphotransferase) domain 1"/>
    <property type="match status" value="1"/>
</dbReference>
<dbReference type="InterPro" id="IPR046349">
    <property type="entry name" value="C1-like_sf"/>
</dbReference>
<dbReference type="InterPro" id="IPR011009">
    <property type="entry name" value="Kinase-like_dom_sf"/>
</dbReference>
<dbReference type="InterPro" id="IPR002219">
    <property type="entry name" value="PE/DAG-bd"/>
</dbReference>
<dbReference type="InterPro" id="IPR011993">
    <property type="entry name" value="PH-like_dom_sf"/>
</dbReference>
<dbReference type="InterPro" id="IPR000719">
    <property type="entry name" value="Prot_kinase_dom"/>
</dbReference>
<dbReference type="InterPro" id="IPR017441">
    <property type="entry name" value="Protein_kinase_ATP_BS"/>
</dbReference>
<dbReference type="InterPro" id="IPR008271">
    <property type="entry name" value="Ser/Thr_kinase_AS"/>
</dbReference>
<dbReference type="PANTHER" id="PTHR22968">
    <property type="entry name" value="PROTEIN KINASE C, MU"/>
    <property type="match status" value="1"/>
</dbReference>
<dbReference type="PANTHER" id="PTHR22968:SF15">
    <property type="entry name" value="SERINE_THREONINE-PROTEIN KINASE DKF-1"/>
    <property type="match status" value="1"/>
</dbReference>
<dbReference type="Pfam" id="PF00130">
    <property type="entry name" value="C1_1"/>
    <property type="match status" value="2"/>
</dbReference>
<dbReference type="Pfam" id="PF00069">
    <property type="entry name" value="Pkinase"/>
    <property type="match status" value="1"/>
</dbReference>
<dbReference type="SMART" id="SM00109">
    <property type="entry name" value="C1"/>
    <property type="match status" value="2"/>
</dbReference>
<dbReference type="SMART" id="SM00220">
    <property type="entry name" value="S_TKc"/>
    <property type="match status" value="1"/>
</dbReference>
<dbReference type="SUPFAM" id="SSF57889">
    <property type="entry name" value="Cysteine-rich domain"/>
    <property type="match status" value="2"/>
</dbReference>
<dbReference type="SUPFAM" id="SSF50729">
    <property type="entry name" value="PH domain-like"/>
    <property type="match status" value="1"/>
</dbReference>
<dbReference type="SUPFAM" id="SSF56112">
    <property type="entry name" value="Protein kinase-like (PK-like)"/>
    <property type="match status" value="1"/>
</dbReference>
<dbReference type="PROSITE" id="PS00107">
    <property type="entry name" value="PROTEIN_KINASE_ATP"/>
    <property type="match status" value="1"/>
</dbReference>
<dbReference type="PROSITE" id="PS50011">
    <property type="entry name" value="PROTEIN_KINASE_DOM"/>
    <property type="match status" value="1"/>
</dbReference>
<dbReference type="PROSITE" id="PS00108">
    <property type="entry name" value="PROTEIN_KINASE_ST"/>
    <property type="match status" value="1"/>
</dbReference>
<dbReference type="PROSITE" id="PS00479">
    <property type="entry name" value="ZF_DAG_PE_1"/>
    <property type="match status" value="1"/>
</dbReference>
<dbReference type="PROSITE" id="PS50081">
    <property type="entry name" value="ZF_DAG_PE_2"/>
    <property type="match status" value="2"/>
</dbReference>
<organism>
    <name type="scientific">Caenorhabditis briggsae</name>
    <dbReference type="NCBI Taxonomy" id="6238"/>
    <lineage>
        <taxon>Eukaryota</taxon>
        <taxon>Metazoa</taxon>
        <taxon>Ecdysozoa</taxon>
        <taxon>Nematoda</taxon>
        <taxon>Chromadorea</taxon>
        <taxon>Rhabditida</taxon>
        <taxon>Rhabditina</taxon>
        <taxon>Rhabditomorpha</taxon>
        <taxon>Rhabditoidea</taxon>
        <taxon>Rhabditidae</taxon>
        <taxon>Peloderinae</taxon>
        <taxon>Caenorhabditis</taxon>
    </lineage>
</organism>
<evidence type="ECO:0000250" key="1"/>
<evidence type="ECO:0000250" key="2">
    <source>
        <dbReference type="UniProtKB" id="P28523"/>
    </source>
</evidence>
<evidence type="ECO:0000250" key="3">
    <source>
        <dbReference type="UniProtKB" id="Q9XUJ7"/>
    </source>
</evidence>
<evidence type="ECO:0000255" key="4"/>
<evidence type="ECO:0000255" key="5">
    <source>
        <dbReference type="PROSITE-ProRule" id="PRU00159"/>
    </source>
</evidence>
<evidence type="ECO:0000255" key="6">
    <source>
        <dbReference type="PROSITE-ProRule" id="PRU00226"/>
    </source>
</evidence>
<evidence type="ECO:0000255" key="7">
    <source>
        <dbReference type="PROSITE-ProRule" id="PRU10027"/>
    </source>
</evidence>
<evidence type="ECO:0000312" key="8">
    <source>
        <dbReference type="EMBL" id="CAP36943.2"/>
    </source>
</evidence>
<sequence>MDTSGSTTDFGDHVVLRYGGTKEMVPLIRHEQMLDMLMERARQIVQGFGSLDTRNMYLFRHEYNSPTLLFPITSPSQIASFSKNPGCILEIILVDRTETAVIPHVVEPESYMLPTFCDFCGELLTGLLRQGVKCKNCNRNFHKRVRMQQGIIVEHLDPLPQDRGLLDRPCYPHCHQRLLEFRCPRCQRLLVSLPHTLIEHSYRQFTVCKVCDHLLVGLMKQGLKCRDCGVNVHRKCAMELPSNCILSENAISRVNFADSEAEQASSSDNIPLFRLPDDIKIKKKFKKKFLHREKRIEKYVFSRPPGQVGVRATEKKNLEGWMIHFILSDPERRLKHYWMMQNNAIHLYNEYSEGIGVNPNRVYRIIPLAEITSVVQNNGKSVLAKHPPHCFEIRTTTNTVFCVGEDYHAFSGGPPKKIPRSMSVRPTSNTTMWFQFIKESLQPPSRNNEENAEQALEFANLYQVLSDKTLGSGQFGTVYSAIQRHSGKEVAVKVISKERFSKKGSGAESMRAEVAILQQTCHPGIVCLEFMCETKDKIFVVMEKMNGDMLEMILSQELGRLNSRATKFLLVQILCALKYLHDQGIAHCDLKPENVLLSDMGSNFPQTKICDFGYARFIPESQFRKTVVGTPAYLPPEVLQRKGYNKSLDMWSVGVIIYVTLSGTFPFNEGEEVSISEQIQNASFMFPTEPWSEVEPLAVDLIQKLLKVEIEARMSIEKCLEHGWLKGEQLYRDLRDLEVRLNTPRYLTSPQDDVLYGPLR</sequence>
<name>DKF1_CAEBR</name>
<reference evidence="8" key="1">
    <citation type="journal article" date="2003" name="PLoS Biol.">
        <title>The genome sequence of Caenorhabditis briggsae: a platform for comparative genomics.</title>
        <authorList>
            <person name="Stein L.D."/>
            <person name="Bao Z."/>
            <person name="Blasiar D."/>
            <person name="Blumenthal T."/>
            <person name="Brent M.R."/>
            <person name="Chen N."/>
            <person name="Chinwalla A."/>
            <person name="Clarke L."/>
            <person name="Clee C."/>
            <person name="Coghlan A."/>
            <person name="Coulson A."/>
            <person name="D'Eustachio P."/>
            <person name="Fitch D.H.A."/>
            <person name="Fulton L.A."/>
            <person name="Fulton R.E."/>
            <person name="Griffiths-Jones S."/>
            <person name="Harris T.W."/>
            <person name="Hillier L.W."/>
            <person name="Kamath R."/>
            <person name="Kuwabara P.E."/>
            <person name="Mardis E.R."/>
            <person name="Marra M.A."/>
            <person name="Miner T.L."/>
            <person name="Minx P."/>
            <person name="Mullikin J.C."/>
            <person name="Plumb R.W."/>
            <person name="Rogers J."/>
            <person name="Schein J.E."/>
            <person name="Sohrmann M."/>
            <person name="Spieth J."/>
            <person name="Stajich J.E."/>
            <person name="Wei C."/>
            <person name="Willey D."/>
            <person name="Wilson R.K."/>
            <person name="Durbin R.M."/>
            <person name="Waterston R.H."/>
        </authorList>
    </citation>
    <scope>NUCLEOTIDE SEQUENCE [LARGE SCALE GENOMIC DNA]</scope>
    <source>
        <strain evidence="8">AF16</strain>
    </source>
</reference>
<protein>
    <recommendedName>
        <fullName evidence="3 8">Serine/threonine-protein kinase dkf-1</fullName>
        <ecNumber>2.7.11.13</ecNumber>
    </recommendedName>
    <alternativeName>
        <fullName evidence="3">D kinase family-1</fullName>
    </alternativeName>
</protein>
<comment type="function">
    <text evidence="3">Converts transient diacylglycerol (DAG) signals into prolonged physiological effects, independently of PKC. Role in the regulation of growth and neuromuscular control of movement. Involved in immune response to S.aureus bacterium by activating transcription factor hlh-30 downstream of phospholipase plc-1.</text>
</comment>
<comment type="catalytic activity">
    <reaction evidence="3">
        <text>L-seryl-[protein] + ATP = O-phospho-L-seryl-[protein] + ADP + H(+)</text>
        <dbReference type="Rhea" id="RHEA:17989"/>
        <dbReference type="Rhea" id="RHEA-COMP:9863"/>
        <dbReference type="Rhea" id="RHEA-COMP:11604"/>
        <dbReference type="ChEBI" id="CHEBI:15378"/>
        <dbReference type="ChEBI" id="CHEBI:29999"/>
        <dbReference type="ChEBI" id="CHEBI:30616"/>
        <dbReference type="ChEBI" id="CHEBI:83421"/>
        <dbReference type="ChEBI" id="CHEBI:456216"/>
        <dbReference type="EC" id="2.7.11.13"/>
    </reaction>
</comment>
<comment type="catalytic activity">
    <reaction evidence="3">
        <text>L-threonyl-[protein] + ATP = O-phospho-L-threonyl-[protein] + ADP + H(+)</text>
        <dbReference type="Rhea" id="RHEA:46608"/>
        <dbReference type="Rhea" id="RHEA-COMP:11060"/>
        <dbReference type="Rhea" id="RHEA-COMP:11605"/>
        <dbReference type="ChEBI" id="CHEBI:15378"/>
        <dbReference type="ChEBI" id="CHEBI:30013"/>
        <dbReference type="ChEBI" id="CHEBI:30616"/>
        <dbReference type="ChEBI" id="CHEBI:61977"/>
        <dbReference type="ChEBI" id="CHEBI:456216"/>
        <dbReference type="EC" id="2.7.11.13"/>
    </reaction>
</comment>
<comment type="cofactor">
    <cofactor evidence="3">
        <name>Mg(2+)</name>
        <dbReference type="ChEBI" id="CHEBI:18420"/>
    </cofactor>
</comment>
<comment type="activity regulation">
    <text evidence="1">Activated by DAG and phorbol esters. Phorbol-ester/DAG-type domain 1 binds phorbol ester with high affinity and mediates accumulation at the cell periphery. Phorbol-ester/DAG-type domain 2 binds phorbol ester with low affinity but may mediate initial contact, resulting in a conformational change allowing previously occluded domain 1 to anchor the kinase. Phosphorylation on Thr-626 is then also required for activation and may also result in a further conformational change (By similarity).</text>
</comment>
<comment type="subcellular location">
    <subcellularLocation>
        <location evidence="3">Cytoplasm</location>
    </subcellularLocation>
    <subcellularLocation>
        <location evidence="3">Membrane</location>
    </subcellularLocation>
    <text evidence="3">Translocation to the cell membrane is required for kinase activation. On activation, the protein may migrate back to the cytoplasm (By similarity).</text>
</comment>
<comment type="domain">
    <text evidence="3">The PH domain inhibits PKD catalytic activity in the absence of DAG, either by direct steric occlusion or distortion of the PKD catalytic cleft.</text>
</comment>
<comment type="PTM">
    <text evidence="3">Prolonged phosphorylation at Thr-626 results in ubiquitination and degradation.</text>
</comment>
<comment type="similarity">
    <text evidence="4">Belongs to the protein kinase superfamily. CAMK Ser/Thr protein kinase family. PKD subfamily.</text>
</comment>
<proteinExistence type="inferred from homology"/>
<feature type="chain" id="PRO_0000385351" description="Serine/threonine-protein kinase dkf-1">
    <location>
        <begin position="1"/>
        <end position="760"/>
    </location>
</feature>
<feature type="domain" description="PH" evidence="4">
    <location>
        <begin position="316"/>
        <end position="444"/>
    </location>
</feature>
<feature type="domain" description="Protein kinase" evidence="5">
    <location>
        <begin position="464"/>
        <end position="725"/>
    </location>
</feature>
<feature type="zinc finger region" description="Phorbol-ester/DAG-type 1" evidence="6">
    <location>
        <begin position="103"/>
        <end position="153"/>
    </location>
</feature>
<feature type="zinc finger region" description="Phorbol-ester/DAG-type 2" evidence="6">
    <location>
        <begin position="194"/>
        <end position="244"/>
    </location>
</feature>
<feature type="active site" description="Proton acceptor" evidence="2 5 7">
    <location>
        <position position="589"/>
    </location>
</feature>
<feature type="binding site" evidence="2 5">
    <location>
        <begin position="470"/>
        <end position="478"/>
    </location>
    <ligand>
        <name>ATP</name>
        <dbReference type="ChEBI" id="CHEBI:30616"/>
    </ligand>
</feature>
<feature type="binding site" evidence="3 5">
    <location>
        <position position="493"/>
    </location>
    <ligand>
        <name>ATP</name>
        <dbReference type="ChEBI" id="CHEBI:30616"/>
    </ligand>
</feature>
<feature type="modified residue" description="Phosphothreonine" evidence="1">
    <location>
        <position position="626"/>
    </location>
</feature>
<gene>
    <name evidence="8" type="primary">dkf-1</name>
    <name type="ORF">CBG19775</name>
</gene>
<keyword id="KW-0067">ATP-binding</keyword>
<keyword id="KW-0963">Cytoplasm</keyword>
<keyword id="KW-0418">Kinase</keyword>
<keyword id="KW-0460">Magnesium</keyword>
<keyword id="KW-0472">Membrane</keyword>
<keyword id="KW-0479">Metal-binding</keyword>
<keyword id="KW-0547">Nucleotide-binding</keyword>
<keyword id="KW-0597">Phosphoprotein</keyword>
<keyword id="KW-1185">Reference proteome</keyword>
<keyword id="KW-0677">Repeat</keyword>
<keyword id="KW-0723">Serine/threonine-protein kinase</keyword>
<keyword id="KW-0808">Transferase</keyword>
<keyword id="KW-0832">Ubl conjugation</keyword>
<keyword id="KW-0862">Zinc</keyword>
<keyword id="KW-0863">Zinc-finger</keyword>
<accession>A8XWC4</accession>